<keyword id="KW-0021">Allosteric enzyme</keyword>
<keyword id="KW-0328">Glycosyltransferase</keyword>
<keyword id="KW-0342">GTP-binding</keyword>
<keyword id="KW-0460">Magnesium</keyword>
<keyword id="KW-0547">Nucleotide-binding</keyword>
<keyword id="KW-1185">Reference proteome</keyword>
<keyword id="KW-0808">Transferase</keyword>
<name>UPP_NOCFA</name>
<proteinExistence type="inferred from homology"/>
<sequence length="207" mass="21708">MRTHTVDHPLAAALLTTMRDERTPNAVFRAALCDLTGILVYEALREAPVDTYEINTPVAPATGARLAQPPLLVPVLRAGLGMVDAAAGLVPDARVGFVGIARDESTHQPVPYMESLPEDLAGVPVFVLDPMLATGGSMRHTLELLAARGATDITALCVVATPEGIATLERSGLPVRLVTAAVDEGLNENAYIVPGLGDAGDRQFGPR</sequence>
<feature type="chain" id="PRO_0000120862" description="Uracil phosphoribosyltransferase">
    <location>
        <begin position="1"/>
        <end position="207"/>
    </location>
</feature>
<feature type="binding site" evidence="1">
    <location>
        <position position="77"/>
    </location>
    <ligand>
        <name>5-phospho-alpha-D-ribose 1-diphosphate</name>
        <dbReference type="ChEBI" id="CHEBI:58017"/>
    </ligand>
</feature>
<feature type="binding site" evidence="1">
    <location>
        <position position="102"/>
    </location>
    <ligand>
        <name>5-phospho-alpha-D-ribose 1-diphosphate</name>
        <dbReference type="ChEBI" id="CHEBI:58017"/>
    </ligand>
</feature>
<feature type="binding site" evidence="1">
    <location>
        <begin position="129"/>
        <end position="137"/>
    </location>
    <ligand>
        <name>5-phospho-alpha-D-ribose 1-diphosphate</name>
        <dbReference type="ChEBI" id="CHEBI:58017"/>
    </ligand>
</feature>
<feature type="binding site" evidence="1">
    <location>
        <position position="192"/>
    </location>
    <ligand>
        <name>uracil</name>
        <dbReference type="ChEBI" id="CHEBI:17568"/>
    </ligand>
</feature>
<feature type="binding site" evidence="1">
    <location>
        <begin position="197"/>
        <end position="199"/>
    </location>
    <ligand>
        <name>uracil</name>
        <dbReference type="ChEBI" id="CHEBI:17568"/>
    </ligand>
</feature>
<feature type="binding site" evidence="1">
    <location>
        <position position="198"/>
    </location>
    <ligand>
        <name>5-phospho-alpha-D-ribose 1-diphosphate</name>
        <dbReference type="ChEBI" id="CHEBI:58017"/>
    </ligand>
</feature>
<protein>
    <recommendedName>
        <fullName evidence="1">Uracil phosphoribosyltransferase</fullName>
        <ecNumber evidence="1">2.4.2.9</ecNumber>
    </recommendedName>
    <alternativeName>
        <fullName evidence="1">UMP pyrophosphorylase</fullName>
    </alternativeName>
    <alternativeName>
        <fullName evidence="1">UPRTase</fullName>
    </alternativeName>
</protein>
<comment type="function">
    <text evidence="1">Catalyzes the conversion of uracil and 5-phospho-alpha-D-ribose 1-diphosphate (PRPP) to UMP and diphosphate.</text>
</comment>
<comment type="catalytic activity">
    <reaction evidence="1">
        <text>UMP + diphosphate = 5-phospho-alpha-D-ribose 1-diphosphate + uracil</text>
        <dbReference type="Rhea" id="RHEA:13017"/>
        <dbReference type="ChEBI" id="CHEBI:17568"/>
        <dbReference type="ChEBI" id="CHEBI:33019"/>
        <dbReference type="ChEBI" id="CHEBI:57865"/>
        <dbReference type="ChEBI" id="CHEBI:58017"/>
        <dbReference type="EC" id="2.4.2.9"/>
    </reaction>
</comment>
<comment type="cofactor">
    <cofactor evidence="1">
        <name>Mg(2+)</name>
        <dbReference type="ChEBI" id="CHEBI:18420"/>
    </cofactor>
    <text evidence="1">Binds 1 Mg(2+) ion per subunit. The magnesium is bound as Mg-PRPP.</text>
</comment>
<comment type="activity regulation">
    <text evidence="1">Allosterically activated by GTP.</text>
</comment>
<comment type="pathway">
    <text evidence="1">Pyrimidine metabolism; UMP biosynthesis via salvage pathway; UMP from uracil: step 1/1.</text>
</comment>
<comment type="similarity">
    <text evidence="1">Belongs to the UPRTase family.</text>
</comment>
<gene>
    <name evidence="1" type="primary">upp</name>
    <name type="ordered locus">NFA_9590</name>
</gene>
<dbReference type="EC" id="2.4.2.9" evidence="1"/>
<dbReference type="EMBL" id="AP006618">
    <property type="protein sequence ID" value="BAD55804.1"/>
    <property type="molecule type" value="Genomic_DNA"/>
</dbReference>
<dbReference type="RefSeq" id="WP_011207489.1">
    <property type="nucleotide sequence ID" value="NC_006361.1"/>
</dbReference>
<dbReference type="SMR" id="Q5Z187"/>
<dbReference type="STRING" id="247156.NFA_9590"/>
<dbReference type="GeneID" id="61131783"/>
<dbReference type="KEGG" id="nfa:NFA_9590"/>
<dbReference type="eggNOG" id="COG0035">
    <property type="taxonomic scope" value="Bacteria"/>
</dbReference>
<dbReference type="HOGENOM" id="CLU_067096_2_3_11"/>
<dbReference type="OrthoDB" id="9781675at2"/>
<dbReference type="UniPathway" id="UPA00574">
    <property type="reaction ID" value="UER00636"/>
</dbReference>
<dbReference type="Proteomes" id="UP000006820">
    <property type="component" value="Chromosome"/>
</dbReference>
<dbReference type="GO" id="GO:0005525">
    <property type="term" value="F:GTP binding"/>
    <property type="evidence" value="ECO:0007669"/>
    <property type="project" value="UniProtKB-KW"/>
</dbReference>
<dbReference type="GO" id="GO:0000287">
    <property type="term" value="F:magnesium ion binding"/>
    <property type="evidence" value="ECO:0007669"/>
    <property type="project" value="UniProtKB-UniRule"/>
</dbReference>
<dbReference type="GO" id="GO:0004845">
    <property type="term" value="F:uracil phosphoribosyltransferase activity"/>
    <property type="evidence" value="ECO:0007669"/>
    <property type="project" value="UniProtKB-UniRule"/>
</dbReference>
<dbReference type="GO" id="GO:0044206">
    <property type="term" value="P:UMP salvage"/>
    <property type="evidence" value="ECO:0007669"/>
    <property type="project" value="UniProtKB-UniRule"/>
</dbReference>
<dbReference type="GO" id="GO:0006223">
    <property type="term" value="P:uracil salvage"/>
    <property type="evidence" value="ECO:0007669"/>
    <property type="project" value="InterPro"/>
</dbReference>
<dbReference type="CDD" id="cd06223">
    <property type="entry name" value="PRTases_typeI"/>
    <property type="match status" value="1"/>
</dbReference>
<dbReference type="FunFam" id="3.40.50.2020:FF:000003">
    <property type="entry name" value="Uracil phosphoribosyltransferase"/>
    <property type="match status" value="1"/>
</dbReference>
<dbReference type="Gene3D" id="3.40.50.2020">
    <property type="match status" value="1"/>
</dbReference>
<dbReference type="HAMAP" id="MF_01218_B">
    <property type="entry name" value="Upp_B"/>
    <property type="match status" value="1"/>
</dbReference>
<dbReference type="InterPro" id="IPR000836">
    <property type="entry name" value="PRibTrfase_dom"/>
</dbReference>
<dbReference type="InterPro" id="IPR029057">
    <property type="entry name" value="PRTase-like"/>
</dbReference>
<dbReference type="InterPro" id="IPR034332">
    <property type="entry name" value="Upp_B"/>
</dbReference>
<dbReference type="InterPro" id="IPR050054">
    <property type="entry name" value="UPRTase/APRTase"/>
</dbReference>
<dbReference type="InterPro" id="IPR005765">
    <property type="entry name" value="Ura_phspho_trans"/>
</dbReference>
<dbReference type="NCBIfam" id="NF001097">
    <property type="entry name" value="PRK00129.1"/>
    <property type="match status" value="1"/>
</dbReference>
<dbReference type="NCBIfam" id="TIGR01091">
    <property type="entry name" value="upp"/>
    <property type="match status" value="1"/>
</dbReference>
<dbReference type="PANTHER" id="PTHR32315">
    <property type="entry name" value="ADENINE PHOSPHORIBOSYLTRANSFERASE"/>
    <property type="match status" value="1"/>
</dbReference>
<dbReference type="PANTHER" id="PTHR32315:SF4">
    <property type="entry name" value="URACIL PHOSPHORIBOSYLTRANSFERASE, CHLOROPLASTIC"/>
    <property type="match status" value="1"/>
</dbReference>
<dbReference type="Pfam" id="PF14681">
    <property type="entry name" value="UPRTase"/>
    <property type="match status" value="1"/>
</dbReference>
<dbReference type="SUPFAM" id="SSF53271">
    <property type="entry name" value="PRTase-like"/>
    <property type="match status" value="1"/>
</dbReference>
<evidence type="ECO:0000255" key="1">
    <source>
        <dbReference type="HAMAP-Rule" id="MF_01218"/>
    </source>
</evidence>
<accession>Q5Z187</accession>
<reference key="1">
    <citation type="journal article" date="2004" name="Proc. Natl. Acad. Sci. U.S.A.">
        <title>The complete genomic sequence of Nocardia farcinica IFM 10152.</title>
        <authorList>
            <person name="Ishikawa J."/>
            <person name="Yamashita A."/>
            <person name="Mikami Y."/>
            <person name="Hoshino Y."/>
            <person name="Kurita H."/>
            <person name="Hotta K."/>
            <person name="Shiba T."/>
            <person name="Hattori M."/>
        </authorList>
    </citation>
    <scope>NUCLEOTIDE SEQUENCE [LARGE SCALE GENOMIC DNA]</scope>
    <source>
        <strain>IFM 10152</strain>
    </source>
</reference>
<organism>
    <name type="scientific">Nocardia farcinica (strain IFM 10152)</name>
    <dbReference type="NCBI Taxonomy" id="247156"/>
    <lineage>
        <taxon>Bacteria</taxon>
        <taxon>Bacillati</taxon>
        <taxon>Actinomycetota</taxon>
        <taxon>Actinomycetes</taxon>
        <taxon>Mycobacteriales</taxon>
        <taxon>Nocardiaceae</taxon>
        <taxon>Nocardia</taxon>
    </lineage>
</organism>